<sequence length="22" mass="2553">RDCCTPPKKCKDRRCKPLKCCA</sequence>
<evidence type="ECO:0000269" key="1">
    <source>
    </source>
</evidence>
<evidence type="ECO:0000269" key="2">
    <source>
    </source>
</evidence>
<evidence type="ECO:0000303" key="3">
    <source>
    </source>
</evidence>
<evidence type="ECO:0000305" key="4"/>
<evidence type="ECO:0000305" key="5">
    <source>
    </source>
</evidence>
<evidence type="ECO:0000305" key="6">
    <source>
    </source>
</evidence>
<evidence type="ECO:0007744" key="7">
    <source>
        <dbReference type="PDB" id="6MJD"/>
    </source>
</evidence>
<evidence type="ECO:0007829" key="8">
    <source>
        <dbReference type="PDB" id="6MJD"/>
    </source>
</evidence>
<organism>
    <name type="scientific">Conus geographus</name>
    <name type="common">Geography cone</name>
    <name type="synonym">Nubecula geographus</name>
    <dbReference type="NCBI Taxonomy" id="6491"/>
    <lineage>
        <taxon>Eukaryota</taxon>
        <taxon>Metazoa</taxon>
        <taxon>Spiralia</taxon>
        <taxon>Lophotrochozoa</taxon>
        <taxon>Mollusca</taxon>
        <taxon>Gastropoda</taxon>
        <taxon>Caenogastropoda</taxon>
        <taxon>Neogastropoda</taxon>
        <taxon>Conoidea</taxon>
        <taxon>Conidae</taxon>
        <taxon>Conus</taxon>
        <taxon>Gastridium</taxon>
    </lineage>
</organism>
<comment type="function">
    <text evidence="2">Mu-conotoxins block voltage-gated sodium channels (Nav). This toxin shows potent activity on Nav1.4/SCN4A (IC(50)=286 nM), and weak activity on mNav1.6/SCN8A.</text>
</comment>
<comment type="subcellular location">
    <subcellularLocation>
        <location evidence="1">Secreted</location>
    </subcellularLocation>
</comment>
<comment type="tissue specificity">
    <text evidence="5">Expressed by the venom duct.</text>
</comment>
<comment type="domain">
    <text evidence="4">The cysteine framework is III (CC-C-C-CC). Classified in the M-4 branch, since 4 residues stand between the fourth and the fifth cysteine residues.</text>
</comment>
<comment type="miscellaneous">
    <text evidence="2">Negative results: does not show activity when tested (1 uM) on rNav1.2/SCN2A, hNav1.5/SCN7A, hNav1.7/SCN9A and hNav1.8/ SCN10A.</text>
</comment>
<comment type="miscellaneous">
    <text evidence="6">Both the Thr-5-hydroxypro-6 and Lys-16-hydroxypro-17 peptide bonds are in trans conformations, whereas the hydroxypro-6-hydroxypro-7 bond adopts a cis conformation.</text>
</comment>
<comment type="similarity">
    <text evidence="4">Belongs to the conotoxin M superfamily.</text>
</comment>
<reference key="1">
    <citation type="journal article" date="1985" name="J. Biol. Chem.">
        <title>Conus geographus toxins that discriminate between neuronal and muscle sodium channels.</title>
        <authorList>
            <person name="Cruz L.J."/>
            <person name="Gray W.R."/>
            <person name="Olivera B.M."/>
            <person name="Zeikus R.D."/>
            <person name="Kerr L."/>
            <person name="Yoshikami D."/>
            <person name="Moczydlowski E."/>
        </authorList>
    </citation>
    <scope>PROTEIN SEQUENCE</scope>
    <scope>HYDROXYLATION AT PRO-6; PRO-7 AND PRO-17</scope>
    <scope>AMIDATION AT ALA-22</scope>
    <scope>SUBCELLULAR LOCATION</scope>
</reference>
<reference key="2">
    <citation type="journal article" date="2018" name="Molecules">
        <title>NMR Structure of mu-conotoxin GIIIC: leucine 18 induces local repacking of the N-terminus resulting in reduced Nav channel potency.</title>
        <authorList>
            <person name="Harvey P.J."/>
            <person name="Kurniawan N.D."/>
            <person name="Finol-Urdaneta R.K."/>
            <person name="McArthur J.R."/>
            <person name="Van Lysebetten D."/>
            <person name="Dash T.S."/>
            <person name="Hill J.M."/>
            <person name="Adams D.J."/>
            <person name="Durek T."/>
            <person name="Craik D.J."/>
        </authorList>
    </citation>
    <scope>STRUCTURE BY NMR</scope>
    <scope>FUNCTION</scope>
    <scope>DISULFIDE BOND</scope>
    <scope>SYNTHESIS</scope>
</reference>
<protein>
    <recommendedName>
        <fullName evidence="3">Mu-conotoxin GIIIC</fullName>
    </recommendedName>
</protein>
<proteinExistence type="evidence at protein level"/>
<accession>P05482</accession>
<feature type="peptide" id="PRO_0000044495" description="Mu-conotoxin GIIIC" evidence="1">
    <location>
        <begin position="1"/>
        <end position="22"/>
    </location>
</feature>
<feature type="site" description="Increases tethering of the N-terminus (compared to GIIIA), forming a more compact structure; as a consequence, the interaction with Nav1.4/SCN4A is affected and the toxin potency is lower than that of GIIIA" evidence="6">
    <location>
        <position position="18"/>
    </location>
</feature>
<feature type="modified residue" description="4-hydroxyproline" evidence="1">
    <location>
        <position position="6"/>
    </location>
</feature>
<feature type="modified residue" description="4-hydroxyproline" evidence="1">
    <location>
        <position position="7"/>
    </location>
</feature>
<feature type="modified residue" description="4-hydroxyproline" evidence="1">
    <location>
        <position position="17"/>
    </location>
</feature>
<feature type="modified residue" description="Alanine amide" evidence="1">
    <location>
        <position position="22"/>
    </location>
</feature>
<feature type="disulfide bond" evidence="2 7">
    <location>
        <begin position="3"/>
        <end position="15"/>
    </location>
</feature>
<feature type="disulfide bond" evidence="2 7">
    <location>
        <begin position="4"/>
        <end position="20"/>
    </location>
</feature>
<feature type="disulfide bond" evidence="2 7">
    <location>
        <begin position="10"/>
        <end position="21"/>
    </location>
</feature>
<feature type="turn" evidence="8">
    <location>
        <begin position="6"/>
        <end position="8"/>
    </location>
</feature>
<feature type="helix" evidence="8">
    <location>
        <begin position="13"/>
        <end position="15"/>
    </location>
</feature>
<dbReference type="PIR" id="C23579">
    <property type="entry name" value="MXKN3"/>
</dbReference>
<dbReference type="PDB" id="6MJD">
    <property type="method" value="NMR"/>
    <property type="chains" value="A=1-22"/>
</dbReference>
<dbReference type="PDBsum" id="6MJD"/>
<dbReference type="BMRB" id="P05482"/>
<dbReference type="SMR" id="P05482"/>
<dbReference type="ConoServer" id="1744">
    <property type="toxin name" value="GIIIC"/>
</dbReference>
<dbReference type="GO" id="GO:0005576">
    <property type="term" value="C:extracellular region"/>
    <property type="evidence" value="ECO:0007669"/>
    <property type="project" value="UniProtKB-SubCell"/>
</dbReference>
<dbReference type="GO" id="GO:0019871">
    <property type="term" value="F:sodium channel inhibitor activity"/>
    <property type="evidence" value="ECO:0007669"/>
    <property type="project" value="InterPro"/>
</dbReference>
<dbReference type="GO" id="GO:0090729">
    <property type="term" value="F:toxin activity"/>
    <property type="evidence" value="ECO:0007669"/>
    <property type="project" value="UniProtKB-KW"/>
</dbReference>
<dbReference type="InterPro" id="IPR008036">
    <property type="entry name" value="Conotoxin_mu-typ"/>
</dbReference>
<dbReference type="Pfam" id="PF05374">
    <property type="entry name" value="Mu-conotoxin"/>
    <property type="match status" value="1"/>
</dbReference>
<dbReference type="PROSITE" id="PS60013">
    <property type="entry name" value="MU_CONOTOXIN"/>
    <property type="match status" value="1"/>
</dbReference>
<name>CM3C_CONGE</name>
<keyword id="KW-0002">3D-structure</keyword>
<keyword id="KW-0027">Amidation</keyword>
<keyword id="KW-0903">Direct protein sequencing</keyword>
<keyword id="KW-1015">Disulfide bond</keyword>
<keyword id="KW-0379">Hydroxylation</keyword>
<keyword id="KW-0872">Ion channel impairing toxin</keyword>
<keyword id="KW-0528">Neurotoxin</keyword>
<keyword id="KW-0964">Secreted</keyword>
<keyword id="KW-0800">Toxin</keyword>
<keyword id="KW-0738">Voltage-gated sodium channel impairing toxin</keyword>